<evidence type="ECO:0000255" key="1">
    <source>
        <dbReference type="HAMAP-Rule" id="MF_01321"/>
    </source>
</evidence>
<dbReference type="EC" id="2.7.7.6" evidence="1"/>
<dbReference type="EMBL" id="AP007255">
    <property type="protein sequence ID" value="BAE51944.1"/>
    <property type="molecule type" value="Genomic_DNA"/>
</dbReference>
<dbReference type="RefSeq" id="WP_011385506.1">
    <property type="nucleotide sequence ID" value="NC_007626.1"/>
</dbReference>
<dbReference type="SMR" id="Q2W2I1"/>
<dbReference type="STRING" id="342108.amb3140"/>
<dbReference type="KEGG" id="mag:amb3140"/>
<dbReference type="HOGENOM" id="CLU_000524_4_0_5"/>
<dbReference type="OrthoDB" id="9803954at2"/>
<dbReference type="Proteomes" id="UP000007058">
    <property type="component" value="Chromosome"/>
</dbReference>
<dbReference type="GO" id="GO:0000428">
    <property type="term" value="C:DNA-directed RNA polymerase complex"/>
    <property type="evidence" value="ECO:0007669"/>
    <property type="project" value="UniProtKB-KW"/>
</dbReference>
<dbReference type="GO" id="GO:0003677">
    <property type="term" value="F:DNA binding"/>
    <property type="evidence" value="ECO:0007669"/>
    <property type="project" value="UniProtKB-UniRule"/>
</dbReference>
<dbReference type="GO" id="GO:0003899">
    <property type="term" value="F:DNA-directed RNA polymerase activity"/>
    <property type="evidence" value="ECO:0007669"/>
    <property type="project" value="UniProtKB-UniRule"/>
</dbReference>
<dbReference type="GO" id="GO:0032549">
    <property type="term" value="F:ribonucleoside binding"/>
    <property type="evidence" value="ECO:0007669"/>
    <property type="project" value="InterPro"/>
</dbReference>
<dbReference type="GO" id="GO:0006351">
    <property type="term" value="P:DNA-templated transcription"/>
    <property type="evidence" value="ECO:0007669"/>
    <property type="project" value="UniProtKB-UniRule"/>
</dbReference>
<dbReference type="CDD" id="cd00653">
    <property type="entry name" value="RNA_pol_B_RPB2"/>
    <property type="match status" value="1"/>
</dbReference>
<dbReference type="FunFam" id="2.40.50.100:FF:000006">
    <property type="entry name" value="DNA-directed RNA polymerase subunit beta"/>
    <property type="match status" value="1"/>
</dbReference>
<dbReference type="FunFam" id="3.90.1800.10:FF:000001">
    <property type="entry name" value="DNA-directed RNA polymerase subunit beta"/>
    <property type="match status" value="1"/>
</dbReference>
<dbReference type="Gene3D" id="2.40.50.100">
    <property type="match status" value="1"/>
</dbReference>
<dbReference type="Gene3D" id="2.40.50.150">
    <property type="match status" value="1"/>
</dbReference>
<dbReference type="Gene3D" id="3.90.1100.10">
    <property type="match status" value="2"/>
</dbReference>
<dbReference type="Gene3D" id="2.30.150.10">
    <property type="entry name" value="DNA-directed RNA polymerase, beta subunit, external 1 domain"/>
    <property type="match status" value="1"/>
</dbReference>
<dbReference type="Gene3D" id="2.40.270.10">
    <property type="entry name" value="DNA-directed RNA polymerase, subunit 2, domain 6"/>
    <property type="match status" value="1"/>
</dbReference>
<dbReference type="Gene3D" id="3.90.1800.10">
    <property type="entry name" value="RNA polymerase alpha subunit dimerisation domain"/>
    <property type="match status" value="1"/>
</dbReference>
<dbReference type="HAMAP" id="MF_01321">
    <property type="entry name" value="RNApol_bact_RpoB"/>
    <property type="match status" value="1"/>
</dbReference>
<dbReference type="InterPro" id="IPR042107">
    <property type="entry name" value="DNA-dir_RNA_pol_bsu_ext_1_sf"/>
</dbReference>
<dbReference type="InterPro" id="IPR019462">
    <property type="entry name" value="DNA-dir_RNA_pol_bsu_external_1"/>
</dbReference>
<dbReference type="InterPro" id="IPR015712">
    <property type="entry name" value="DNA-dir_RNA_pol_su2"/>
</dbReference>
<dbReference type="InterPro" id="IPR007120">
    <property type="entry name" value="DNA-dir_RNAP_su2_dom"/>
</dbReference>
<dbReference type="InterPro" id="IPR037033">
    <property type="entry name" value="DNA-dir_RNAP_su2_hyb_sf"/>
</dbReference>
<dbReference type="InterPro" id="IPR010243">
    <property type="entry name" value="RNA_pol_bsu_bac"/>
</dbReference>
<dbReference type="InterPro" id="IPR007121">
    <property type="entry name" value="RNA_pol_bsu_CS"/>
</dbReference>
<dbReference type="InterPro" id="IPR007644">
    <property type="entry name" value="RNA_pol_bsu_protrusion"/>
</dbReference>
<dbReference type="InterPro" id="IPR007642">
    <property type="entry name" value="RNA_pol_Rpb2_2"/>
</dbReference>
<dbReference type="InterPro" id="IPR007645">
    <property type="entry name" value="RNA_pol_Rpb2_3"/>
</dbReference>
<dbReference type="InterPro" id="IPR007641">
    <property type="entry name" value="RNA_pol_Rpb2_7"/>
</dbReference>
<dbReference type="InterPro" id="IPR014724">
    <property type="entry name" value="RNA_pol_RPB2_OB-fold"/>
</dbReference>
<dbReference type="NCBIfam" id="NF001616">
    <property type="entry name" value="PRK00405.1"/>
    <property type="match status" value="1"/>
</dbReference>
<dbReference type="NCBIfam" id="TIGR02013">
    <property type="entry name" value="rpoB"/>
    <property type="match status" value="1"/>
</dbReference>
<dbReference type="PANTHER" id="PTHR20856">
    <property type="entry name" value="DNA-DIRECTED RNA POLYMERASE I SUBUNIT 2"/>
    <property type="match status" value="1"/>
</dbReference>
<dbReference type="Pfam" id="PF04563">
    <property type="entry name" value="RNA_pol_Rpb2_1"/>
    <property type="match status" value="1"/>
</dbReference>
<dbReference type="Pfam" id="PF04561">
    <property type="entry name" value="RNA_pol_Rpb2_2"/>
    <property type="match status" value="1"/>
</dbReference>
<dbReference type="Pfam" id="PF04565">
    <property type="entry name" value="RNA_pol_Rpb2_3"/>
    <property type="match status" value="1"/>
</dbReference>
<dbReference type="Pfam" id="PF10385">
    <property type="entry name" value="RNA_pol_Rpb2_45"/>
    <property type="match status" value="1"/>
</dbReference>
<dbReference type="Pfam" id="PF00562">
    <property type="entry name" value="RNA_pol_Rpb2_6"/>
    <property type="match status" value="1"/>
</dbReference>
<dbReference type="Pfam" id="PF04560">
    <property type="entry name" value="RNA_pol_Rpb2_7"/>
    <property type="match status" value="1"/>
</dbReference>
<dbReference type="SUPFAM" id="SSF64484">
    <property type="entry name" value="beta and beta-prime subunits of DNA dependent RNA-polymerase"/>
    <property type="match status" value="1"/>
</dbReference>
<dbReference type="PROSITE" id="PS01166">
    <property type="entry name" value="RNA_POL_BETA"/>
    <property type="match status" value="1"/>
</dbReference>
<comment type="function">
    <text evidence="1">DNA-dependent RNA polymerase catalyzes the transcription of DNA into RNA using the four ribonucleoside triphosphates as substrates.</text>
</comment>
<comment type="catalytic activity">
    <reaction evidence="1">
        <text>RNA(n) + a ribonucleoside 5'-triphosphate = RNA(n+1) + diphosphate</text>
        <dbReference type="Rhea" id="RHEA:21248"/>
        <dbReference type="Rhea" id="RHEA-COMP:14527"/>
        <dbReference type="Rhea" id="RHEA-COMP:17342"/>
        <dbReference type="ChEBI" id="CHEBI:33019"/>
        <dbReference type="ChEBI" id="CHEBI:61557"/>
        <dbReference type="ChEBI" id="CHEBI:140395"/>
        <dbReference type="EC" id="2.7.7.6"/>
    </reaction>
</comment>
<comment type="subunit">
    <text evidence="1">The RNAP catalytic core consists of 2 alpha, 1 beta, 1 beta' and 1 omega subunit. When a sigma factor is associated with the core the holoenzyme is formed, which can initiate transcription.</text>
</comment>
<comment type="similarity">
    <text evidence="1">Belongs to the RNA polymerase beta chain family.</text>
</comment>
<sequence length="1391" mass="154339">MAKSYTGRKRVRKSFGRIPTVAPMPNLIEVQKSSYDHFLQMDTAPEQRGNVGLQEVFKSVFPIKDFSERGTLEFVRYELEQPKYDVEECQQRGMTFAAPLKVTLRLVVWDIDEDTGSRSIRDIKEQDVYMGDMPLMTSNGTFVINGTERVIVSQMHRSPGVFFDHDKGKTHSSGKYLFAARVIPYRGSWLDFEFDAKDLVYVRIDRRRKLPVTTLLYALDGMNTAALRAQRAAEGRGLEQSEIKGMTSEEILSYFYGKVVYTRGPKGWKTPFDAERLKGVKLVSDLIDAKSGEKVADAGSKMTPRLGKKLREAGLTDIVVFPEDMIGQYVAEDIINEQTGEIFTEAGDELTANLVAELEKAGISELPVLAIDHINVGPYMRNTLAIDKNSSREEALIDIYRVMRPGEPPTLETAEALFTGLFFDSERYDLSAVGRVKMNSRLNTPEVADTVRVLRKEDILGVIKVLVELKDGKGEIDDIDHLGNRRVRSVGELMENQYRVGLLRMERAIRERMSSVDIDSVMPHDLINAKPAAAAVREFFGSSQLSQFMDQTNPLSEITHKRRLSALGPGGLTRERAGFEVRDVHPTHYGRICPIETPEGPNIGLINSLATYARVNQYGFIEAPYRKVFDGRVTSDVVYLSAMEEGRYTVAQANSILDADGRFTEDLVSCRRAGDFVMVPPNEINMIDVSPKQLVSVAAALIPFLENDDANRALMGSNMQRQAVPLIRAEAPLVGTGMEQAVARDSGAAITAKRTGVVDQVDATRVVIRATEETQASASGVDIYNLLKFQRSNQNTCITQRPLVKVGDLIQKGDIIADGPSTQLGELALGRNVLVAFMPWNGYNFEDSILISERIVRDDVFTSIHIEEFEVMARDTKLGQEEITRDIPNVGEEALKNLDEAGIVYIGAEVKPGDILVGKVTPKGESPMTPEEKLLRAIFGEKASDVRDTSLRLPPGVSGTIVEVRVFSRRGVEKDERALAIERAEIERLAKDRDDERHILERSFFARLKALIIGKKVVSGPKGIKAGTVLADANMDELHPSTWRNIAIDDDAVMADAEALKRAFDQQVDKLQERFENKVEKLQRGDELPPGVMKMVKVFVAVKRKLQPGDKMAGRHGNKGVISRIVPLEDMPYLEDGQQVDIVLNPLGVPSRMNVGQILETHLGWACAGLGQQIGGMLDKYKRNAATIIDLKSKLKDVYGDAIYEDEIAGLADNEITELAHNLTPGVPIATPVFDGARESDIVAMLTKAGRSSSGQVTLVDGRTGEPFDRKVTVGYIYMLKLHHLVDDKIHARSIGPYSLVTQQPLGGKAQFGGQRFGEMEVWALEAYGAAYTLQEMLTVKSDDVSGRTKVYEAIVRGDDTFEAGIPESFNVLVKELRSLGLNVELTQRNY</sequence>
<reference key="1">
    <citation type="journal article" date="2005" name="DNA Res.">
        <title>Complete genome sequence of the facultative anaerobic magnetotactic bacterium Magnetospirillum sp. strain AMB-1.</title>
        <authorList>
            <person name="Matsunaga T."/>
            <person name="Okamura Y."/>
            <person name="Fukuda Y."/>
            <person name="Wahyudi A.T."/>
            <person name="Murase Y."/>
            <person name="Takeyama H."/>
        </authorList>
    </citation>
    <scope>NUCLEOTIDE SEQUENCE [LARGE SCALE GENOMIC DNA]</scope>
    <source>
        <strain>ATCC 700264 / AMB-1</strain>
    </source>
</reference>
<accession>Q2W2I1</accession>
<organism>
    <name type="scientific">Paramagnetospirillum magneticum (strain ATCC 700264 / AMB-1)</name>
    <name type="common">Magnetospirillum magneticum</name>
    <dbReference type="NCBI Taxonomy" id="342108"/>
    <lineage>
        <taxon>Bacteria</taxon>
        <taxon>Pseudomonadati</taxon>
        <taxon>Pseudomonadota</taxon>
        <taxon>Alphaproteobacteria</taxon>
        <taxon>Rhodospirillales</taxon>
        <taxon>Magnetospirillaceae</taxon>
        <taxon>Paramagnetospirillum</taxon>
    </lineage>
</organism>
<name>RPOB_PARM1</name>
<keyword id="KW-0240">DNA-directed RNA polymerase</keyword>
<keyword id="KW-0548">Nucleotidyltransferase</keyword>
<keyword id="KW-0804">Transcription</keyword>
<keyword id="KW-0808">Transferase</keyword>
<protein>
    <recommendedName>
        <fullName evidence="1">DNA-directed RNA polymerase subunit beta</fullName>
        <shortName evidence="1">RNAP subunit beta</shortName>
        <ecNumber evidence="1">2.7.7.6</ecNumber>
    </recommendedName>
    <alternativeName>
        <fullName evidence="1">RNA polymerase subunit beta</fullName>
    </alternativeName>
    <alternativeName>
        <fullName evidence="1">Transcriptase subunit beta</fullName>
    </alternativeName>
</protein>
<gene>
    <name evidence="1" type="primary">rpoB</name>
    <name type="ordered locus">amb3140</name>
</gene>
<proteinExistence type="inferred from homology"/>
<feature type="chain" id="PRO_0000237303" description="DNA-directed RNA polymerase subunit beta">
    <location>
        <begin position="1"/>
        <end position="1391"/>
    </location>
</feature>